<reference key="1">
    <citation type="journal article" date="2004" name="Genome Res.">
        <title>The genome sequence of Mycoplasma mycoides subsp. mycoides SC type strain PG1T, the causative agent of contagious bovine pleuropneumonia (CBPP).</title>
        <authorList>
            <person name="Westberg J."/>
            <person name="Persson A."/>
            <person name="Holmberg A."/>
            <person name="Goesmann A."/>
            <person name="Lundeberg J."/>
            <person name="Johansson K.-E."/>
            <person name="Pettersson B."/>
            <person name="Uhlen M."/>
        </authorList>
    </citation>
    <scope>NUCLEOTIDE SEQUENCE [LARGE SCALE GENOMIC DNA]</scope>
    <source>
        <strain>CCUG 32753 / NCTC 10114 / PG1</strain>
    </source>
</reference>
<evidence type="ECO:0000255" key="1">
    <source>
        <dbReference type="HAMAP-Rule" id="MF_00022"/>
    </source>
</evidence>
<keyword id="KW-0030">Aminoacyl-tRNA synthetase</keyword>
<keyword id="KW-0067">ATP-binding</keyword>
<keyword id="KW-0963">Cytoplasm</keyword>
<keyword id="KW-0436">Ligase</keyword>
<keyword id="KW-0547">Nucleotide-binding</keyword>
<keyword id="KW-0648">Protein biosynthesis</keyword>
<keyword id="KW-1185">Reference proteome</keyword>
<comment type="function">
    <text evidence="1">Catalyzes the attachment of glutamate to tRNA(Glu) in a two-step reaction: glutamate is first activated by ATP to form Glu-AMP and then transferred to the acceptor end of tRNA(Glu).</text>
</comment>
<comment type="catalytic activity">
    <reaction evidence="1">
        <text>tRNA(Glu) + L-glutamate + ATP = L-glutamyl-tRNA(Glu) + AMP + diphosphate</text>
        <dbReference type="Rhea" id="RHEA:23540"/>
        <dbReference type="Rhea" id="RHEA-COMP:9663"/>
        <dbReference type="Rhea" id="RHEA-COMP:9680"/>
        <dbReference type="ChEBI" id="CHEBI:29985"/>
        <dbReference type="ChEBI" id="CHEBI:30616"/>
        <dbReference type="ChEBI" id="CHEBI:33019"/>
        <dbReference type="ChEBI" id="CHEBI:78442"/>
        <dbReference type="ChEBI" id="CHEBI:78520"/>
        <dbReference type="ChEBI" id="CHEBI:456215"/>
        <dbReference type="EC" id="6.1.1.17"/>
    </reaction>
</comment>
<comment type="subunit">
    <text evidence="1">Monomer.</text>
</comment>
<comment type="subcellular location">
    <subcellularLocation>
        <location evidence="1">Cytoplasm</location>
    </subcellularLocation>
</comment>
<comment type="similarity">
    <text evidence="1">Belongs to the class-I aminoacyl-tRNA synthetase family. Glutamate--tRNA ligase type 1 subfamily.</text>
</comment>
<dbReference type="EC" id="6.1.1.17" evidence="1"/>
<dbReference type="EMBL" id="BX293980">
    <property type="protein sequence ID" value="CAE76778.1"/>
    <property type="molecule type" value="Genomic_DNA"/>
</dbReference>
<dbReference type="RefSeq" id="NP_975136.1">
    <property type="nucleotide sequence ID" value="NC_005364.2"/>
</dbReference>
<dbReference type="RefSeq" id="WP_011166335.1">
    <property type="nucleotide sequence ID" value="NC_005364.2"/>
</dbReference>
<dbReference type="SMR" id="Q6MUA6"/>
<dbReference type="STRING" id="272632.MSC_0131"/>
<dbReference type="KEGG" id="mmy:MSC_0131"/>
<dbReference type="PATRIC" id="fig|272632.4.peg.139"/>
<dbReference type="eggNOG" id="COG0008">
    <property type="taxonomic scope" value="Bacteria"/>
</dbReference>
<dbReference type="HOGENOM" id="CLU_015768_6_1_14"/>
<dbReference type="Proteomes" id="UP000001016">
    <property type="component" value="Chromosome"/>
</dbReference>
<dbReference type="GO" id="GO:0005829">
    <property type="term" value="C:cytosol"/>
    <property type="evidence" value="ECO:0007669"/>
    <property type="project" value="TreeGrafter"/>
</dbReference>
<dbReference type="GO" id="GO:0005524">
    <property type="term" value="F:ATP binding"/>
    <property type="evidence" value="ECO:0007669"/>
    <property type="project" value="UniProtKB-UniRule"/>
</dbReference>
<dbReference type="GO" id="GO:0004818">
    <property type="term" value="F:glutamate-tRNA ligase activity"/>
    <property type="evidence" value="ECO:0007669"/>
    <property type="project" value="UniProtKB-UniRule"/>
</dbReference>
<dbReference type="GO" id="GO:0000049">
    <property type="term" value="F:tRNA binding"/>
    <property type="evidence" value="ECO:0007669"/>
    <property type="project" value="InterPro"/>
</dbReference>
<dbReference type="GO" id="GO:0008270">
    <property type="term" value="F:zinc ion binding"/>
    <property type="evidence" value="ECO:0007669"/>
    <property type="project" value="InterPro"/>
</dbReference>
<dbReference type="GO" id="GO:0006424">
    <property type="term" value="P:glutamyl-tRNA aminoacylation"/>
    <property type="evidence" value="ECO:0007669"/>
    <property type="project" value="UniProtKB-UniRule"/>
</dbReference>
<dbReference type="CDD" id="cd00808">
    <property type="entry name" value="GluRS_core"/>
    <property type="match status" value="1"/>
</dbReference>
<dbReference type="FunFam" id="3.40.50.620:FF:000007">
    <property type="entry name" value="Glutamate--tRNA ligase"/>
    <property type="match status" value="1"/>
</dbReference>
<dbReference type="Gene3D" id="1.10.10.350">
    <property type="match status" value="1"/>
</dbReference>
<dbReference type="Gene3D" id="3.40.50.620">
    <property type="entry name" value="HUPs"/>
    <property type="match status" value="1"/>
</dbReference>
<dbReference type="HAMAP" id="MF_00022">
    <property type="entry name" value="Glu_tRNA_synth_type1"/>
    <property type="match status" value="1"/>
</dbReference>
<dbReference type="InterPro" id="IPR045462">
    <property type="entry name" value="aa-tRNA-synth_I_cd-bd"/>
</dbReference>
<dbReference type="InterPro" id="IPR020751">
    <property type="entry name" value="aa-tRNA-synth_I_codon-bd_sub2"/>
</dbReference>
<dbReference type="InterPro" id="IPR001412">
    <property type="entry name" value="aa-tRNA-synth_I_CS"/>
</dbReference>
<dbReference type="InterPro" id="IPR008925">
    <property type="entry name" value="aa_tRNA-synth_I_cd-bd_sf"/>
</dbReference>
<dbReference type="InterPro" id="IPR004527">
    <property type="entry name" value="Glu-tRNA-ligase_bac/mito"/>
</dbReference>
<dbReference type="InterPro" id="IPR000924">
    <property type="entry name" value="Glu/Gln-tRNA-synth"/>
</dbReference>
<dbReference type="InterPro" id="IPR020058">
    <property type="entry name" value="Glu/Gln-tRNA-synth_Ib_cat-dom"/>
</dbReference>
<dbReference type="InterPro" id="IPR049940">
    <property type="entry name" value="GluQ/Sye"/>
</dbReference>
<dbReference type="InterPro" id="IPR033910">
    <property type="entry name" value="GluRS_core"/>
</dbReference>
<dbReference type="InterPro" id="IPR014729">
    <property type="entry name" value="Rossmann-like_a/b/a_fold"/>
</dbReference>
<dbReference type="NCBIfam" id="TIGR00464">
    <property type="entry name" value="gltX_bact"/>
    <property type="match status" value="1"/>
</dbReference>
<dbReference type="PANTHER" id="PTHR43311">
    <property type="entry name" value="GLUTAMATE--TRNA LIGASE"/>
    <property type="match status" value="1"/>
</dbReference>
<dbReference type="PANTHER" id="PTHR43311:SF2">
    <property type="entry name" value="GLUTAMATE--TRNA LIGASE, MITOCHONDRIAL-RELATED"/>
    <property type="match status" value="1"/>
</dbReference>
<dbReference type="Pfam" id="PF19269">
    <property type="entry name" value="Anticodon_2"/>
    <property type="match status" value="1"/>
</dbReference>
<dbReference type="Pfam" id="PF00749">
    <property type="entry name" value="tRNA-synt_1c"/>
    <property type="match status" value="1"/>
</dbReference>
<dbReference type="PRINTS" id="PR00987">
    <property type="entry name" value="TRNASYNTHGLU"/>
</dbReference>
<dbReference type="SUPFAM" id="SSF48163">
    <property type="entry name" value="An anticodon-binding domain of class I aminoacyl-tRNA synthetases"/>
    <property type="match status" value="1"/>
</dbReference>
<dbReference type="SUPFAM" id="SSF52374">
    <property type="entry name" value="Nucleotidylyl transferase"/>
    <property type="match status" value="1"/>
</dbReference>
<dbReference type="PROSITE" id="PS00178">
    <property type="entry name" value="AA_TRNA_LIGASE_I"/>
    <property type="match status" value="1"/>
</dbReference>
<organism>
    <name type="scientific">Mycoplasma mycoides subsp. mycoides SC (strain CCUG 32753 / NCTC 10114 / PG1)</name>
    <dbReference type="NCBI Taxonomy" id="272632"/>
    <lineage>
        <taxon>Bacteria</taxon>
        <taxon>Bacillati</taxon>
        <taxon>Mycoplasmatota</taxon>
        <taxon>Mollicutes</taxon>
        <taxon>Mycoplasmataceae</taxon>
        <taxon>Mycoplasma</taxon>
    </lineage>
</organism>
<name>SYE_MYCMS</name>
<proteinExistence type="inferred from homology"/>
<sequence>MSFRLRYAPSPTGFLHIGNTRTALMNYLFAKHYNGSFIVRIEDTDLARNVDGAIESQFENLNWLGIFPDESIFNVGDQKYGKYMQSQKFDRYKQLAEQLVNQNKAYRCFCSSEELEKDYEEQTSKEIIATKYSQKCLFLTQDQISQNLKDKKEYSIRFKVPQNKVWTINDIVRGDVSFDSKDLGDFVILKSNGVATYNFAVVIDDYDMQITHVLRGEEHISNTPRQMMIYDAFNWNYPKFGHLTLIVDNTGKKLSKRSGNALFFIEQYKKQGYLSQAIFNYIALLGWSPPGEQEILSQNELIKIFDEKRFSKSPSTFDMVKMKWINSVYMKKLEDNEYLEFVKSFINTNKFDITSKSEAWLNHLLLLYKKELEYAEQINDHLDLFFNKNTLDNNTIDVLNNLTNYKNVVEIFKNQINDLKDWTIENIKQIIKDTSTLANVKGKDLFMPIRIFATKSEHGPSLADVIYLLGKTTVLNNINSLER</sequence>
<accession>Q6MUA6</accession>
<gene>
    <name evidence="1" type="primary">gltX</name>
    <name type="ordered locus">MSC_0131</name>
</gene>
<feature type="chain" id="PRO_0000119605" description="Glutamate--tRNA ligase">
    <location>
        <begin position="1"/>
        <end position="483"/>
    </location>
</feature>
<feature type="short sequence motif" description="'HIGH' region" evidence="1">
    <location>
        <begin position="9"/>
        <end position="19"/>
    </location>
</feature>
<feature type="short sequence motif" description="'KMSKS' region" evidence="1">
    <location>
        <begin position="253"/>
        <end position="257"/>
    </location>
</feature>
<feature type="binding site" evidence="1">
    <location>
        <position position="256"/>
    </location>
    <ligand>
        <name>ATP</name>
        <dbReference type="ChEBI" id="CHEBI:30616"/>
    </ligand>
</feature>
<protein>
    <recommendedName>
        <fullName evidence="1">Glutamate--tRNA ligase</fullName>
        <ecNumber evidence="1">6.1.1.17</ecNumber>
    </recommendedName>
    <alternativeName>
        <fullName evidence="1">Glutamyl-tRNA synthetase</fullName>
        <shortName evidence="1">GluRS</shortName>
    </alternativeName>
</protein>